<gene>
    <name type="primary">cysK</name>
    <name type="ordered locus">BSU00730</name>
</gene>
<accession>P37887</accession>
<organism>
    <name type="scientific">Bacillus subtilis (strain 168)</name>
    <dbReference type="NCBI Taxonomy" id="224308"/>
    <lineage>
        <taxon>Bacteria</taxon>
        <taxon>Bacillati</taxon>
        <taxon>Bacillota</taxon>
        <taxon>Bacilli</taxon>
        <taxon>Bacillales</taxon>
        <taxon>Bacillaceae</taxon>
        <taxon>Bacillus</taxon>
    </lineage>
</organism>
<comment type="function">
    <text evidence="4">Catalyzes the conversion of O-acetylserine to cysteine. Also acts as a sensor of cysteine availability in the signal transduction pathway modulating CymR activity. When cysteine is present, the pool of O-acetylserine (OAS) is low, which leads to the formation of a CymR-CysK complex and transcriptional repression of the CymR regulon occurs. In the absence of cysteine, the OAS pool is high and the CymR-CysK complex is mostly dissociated, leading to a faster dissociation of CymR from its DNA targets and the lifting of CymR-dependent repression.</text>
</comment>
<comment type="catalytic activity">
    <reaction evidence="3">
        <text>O-acetyl-L-serine + hydrogen sulfide = L-cysteine + acetate</text>
        <dbReference type="Rhea" id="RHEA:14829"/>
        <dbReference type="ChEBI" id="CHEBI:29919"/>
        <dbReference type="ChEBI" id="CHEBI:30089"/>
        <dbReference type="ChEBI" id="CHEBI:35235"/>
        <dbReference type="ChEBI" id="CHEBI:58340"/>
        <dbReference type="EC" id="2.5.1.47"/>
    </reaction>
</comment>
<comment type="cofactor">
    <cofactor>
        <name>pyridoxal 5'-phosphate</name>
        <dbReference type="ChEBI" id="CHEBI:597326"/>
    </cofactor>
</comment>
<comment type="pathway">
    <text>Amino-acid biosynthesis; L-cysteine biosynthesis; L-cysteine from L-serine: step 2/2.</text>
</comment>
<comment type="subunit">
    <text evidence="4">Homodimer. Forms CymR(2):CysK(2) or CymR(4):CysK(4) complexes in the absence of O-acetylserine.</text>
</comment>
<comment type="induction">
    <text evidence="2 4">Highly expressed in the presence of methionine, but poorly expressed in the presence of cystine. Also induced by superoxide. Repressed both by sulfate and cysteine.</text>
</comment>
<comment type="disruption phenotype">
    <text evidence="2 3">Grows very slowly with sulfate, butanesulfonate or cystine as sole sulfur source.</text>
</comment>
<comment type="similarity">
    <text evidence="7">Belongs to the cysteine synthase/cystathionine beta-synthase family.</text>
</comment>
<feature type="initiator methionine" description="Removed" evidence="5 6">
    <location>
        <position position="1"/>
    </location>
</feature>
<feature type="chain" id="PRO_0000167081" description="Cysteine synthase">
    <location>
        <begin position="2"/>
        <end position="308"/>
    </location>
</feature>
<feature type="binding site" evidence="1">
    <location>
        <position position="75"/>
    </location>
    <ligand>
        <name>pyridoxal 5'-phosphate</name>
        <dbReference type="ChEBI" id="CHEBI:597326"/>
    </ligand>
</feature>
<feature type="binding site" evidence="1">
    <location>
        <begin position="179"/>
        <end position="183"/>
    </location>
    <ligand>
        <name>pyridoxal 5'-phosphate</name>
        <dbReference type="ChEBI" id="CHEBI:597326"/>
    </ligand>
</feature>
<feature type="binding site" evidence="1">
    <location>
        <position position="267"/>
    </location>
    <ligand>
        <name>pyridoxal 5'-phosphate</name>
        <dbReference type="ChEBI" id="CHEBI:597326"/>
    </ligand>
</feature>
<feature type="modified residue" description="N6-(pyridoxal phosphate)lysine" evidence="1">
    <location>
        <position position="45"/>
    </location>
</feature>
<name>CYSK_BACSU</name>
<reference key="1">
    <citation type="journal article" date="1994" name="DNA Res.">
        <title>Systematic sequencing of the 180 kilobase region of the Bacillus subtilis chromosome containing the replication origin.</title>
        <authorList>
            <person name="Ogasawara N."/>
            <person name="Nakai S."/>
            <person name="Yoshikawa H."/>
        </authorList>
    </citation>
    <scope>NUCLEOTIDE SEQUENCE [GENOMIC DNA]</scope>
    <source>
        <strain>168</strain>
    </source>
</reference>
<reference key="2">
    <citation type="journal article" date="1997" name="Nature">
        <title>The complete genome sequence of the Gram-positive bacterium Bacillus subtilis.</title>
        <authorList>
            <person name="Kunst F."/>
            <person name="Ogasawara N."/>
            <person name="Moszer I."/>
            <person name="Albertini A.M."/>
            <person name="Alloni G."/>
            <person name="Azevedo V."/>
            <person name="Bertero M.G."/>
            <person name="Bessieres P."/>
            <person name="Bolotin A."/>
            <person name="Borchert S."/>
            <person name="Borriss R."/>
            <person name="Boursier L."/>
            <person name="Brans A."/>
            <person name="Braun M."/>
            <person name="Brignell S.C."/>
            <person name="Bron S."/>
            <person name="Brouillet S."/>
            <person name="Bruschi C.V."/>
            <person name="Caldwell B."/>
            <person name="Capuano V."/>
            <person name="Carter N.M."/>
            <person name="Choi S.-K."/>
            <person name="Codani J.-J."/>
            <person name="Connerton I.F."/>
            <person name="Cummings N.J."/>
            <person name="Daniel R.A."/>
            <person name="Denizot F."/>
            <person name="Devine K.M."/>
            <person name="Duesterhoeft A."/>
            <person name="Ehrlich S.D."/>
            <person name="Emmerson P.T."/>
            <person name="Entian K.-D."/>
            <person name="Errington J."/>
            <person name="Fabret C."/>
            <person name="Ferrari E."/>
            <person name="Foulger D."/>
            <person name="Fritz C."/>
            <person name="Fujita M."/>
            <person name="Fujita Y."/>
            <person name="Fuma S."/>
            <person name="Galizzi A."/>
            <person name="Galleron N."/>
            <person name="Ghim S.-Y."/>
            <person name="Glaser P."/>
            <person name="Goffeau A."/>
            <person name="Golightly E.J."/>
            <person name="Grandi G."/>
            <person name="Guiseppi G."/>
            <person name="Guy B.J."/>
            <person name="Haga K."/>
            <person name="Haiech J."/>
            <person name="Harwood C.R."/>
            <person name="Henaut A."/>
            <person name="Hilbert H."/>
            <person name="Holsappel S."/>
            <person name="Hosono S."/>
            <person name="Hullo M.-F."/>
            <person name="Itaya M."/>
            <person name="Jones L.-M."/>
            <person name="Joris B."/>
            <person name="Karamata D."/>
            <person name="Kasahara Y."/>
            <person name="Klaerr-Blanchard M."/>
            <person name="Klein C."/>
            <person name="Kobayashi Y."/>
            <person name="Koetter P."/>
            <person name="Koningstein G."/>
            <person name="Krogh S."/>
            <person name="Kumano M."/>
            <person name="Kurita K."/>
            <person name="Lapidus A."/>
            <person name="Lardinois S."/>
            <person name="Lauber J."/>
            <person name="Lazarevic V."/>
            <person name="Lee S.-M."/>
            <person name="Levine A."/>
            <person name="Liu H."/>
            <person name="Masuda S."/>
            <person name="Mauel C."/>
            <person name="Medigue C."/>
            <person name="Medina N."/>
            <person name="Mellado R.P."/>
            <person name="Mizuno M."/>
            <person name="Moestl D."/>
            <person name="Nakai S."/>
            <person name="Noback M."/>
            <person name="Noone D."/>
            <person name="O'Reilly M."/>
            <person name="Ogawa K."/>
            <person name="Ogiwara A."/>
            <person name="Oudega B."/>
            <person name="Park S.-H."/>
            <person name="Parro V."/>
            <person name="Pohl T.M."/>
            <person name="Portetelle D."/>
            <person name="Porwollik S."/>
            <person name="Prescott A.M."/>
            <person name="Presecan E."/>
            <person name="Pujic P."/>
            <person name="Purnelle B."/>
            <person name="Rapoport G."/>
            <person name="Rey M."/>
            <person name="Reynolds S."/>
            <person name="Rieger M."/>
            <person name="Rivolta C."/>
            <person name="Rocha E."/>
            <person name="Roche B."/>
            <person name="Rose M."/>
            <person name="Sadaie Y."/>
            <person name="Sato T."/>
            <person name="Scanlan E."/>
            <person name="Schleich S."/>
            <person name="Schroeter R."/>
            <person name="Scoffone F."/>
            <person name="Sekiguchi J."/>
            <person name="Sekowska A."/>
            <person name="Seror S.J."/>
            <person name="Serror P."/>
            <person name="Shin B.-S."/>
            <person name="Soldo B."/>
            <person name="Sorokin A."/>
            <person name="Tacconi E."/>
            <person name="Takagi T."/>
            <person name="Takahashi H."/>
            <person name="Takemaru K."/>
            <person name="Takeuchi M."/>
            <person name="Tamakoshi A."/>
            <person name="Tanaka T."/>
            <person name="Terpstra P."/>
            <person name="Tognoni A."/>
            <person name="Tosato V."/>
            <person name="Uchiyama S."/>
            <person name="Vandenbol M."/>
            <person name="Vannier F."/>
            <person name="Vassarotti A."/>
            <person name="Viari A."/>
            <person name="Wambutt R."/>
            <person name="Wedler E."/>
            <person name="Wedler H."/>
            <person name="Weitzenegger T."/>
            <person name="Winters P."/>
            <person name="Wipat A."/>
            <person name="Yamamoto H."/>
            <person name="Yamane K."/>
            <person name="Yasumoto K."/>
            <person name="Yata K."/>
            <person name="Yoshida K."/>
            <person name="Yoshikawa H.-F."/>
            <person name="Zumstein E."/>
            <person name="Yoshikawa H."/>
            <person name="Danchin A."/>
        </authorList>
    </citation>
    <scope>NUCLEOTIDE SEQUENCE [LARGE SCALE GENOMIC DNA]</scope>
    <source>
        <strain>168</strain>
    </source>
</reference>
<reference key="3">
    <citation type="journal article" date="1996" name="J. Bacteriol.">
        <title>Cold shock stress-induced proteins in Bacillus subtilis.</title>
        <authorList>
            <person name="Graumann P."/>
            <person name="Schroeder K."/>
            <person name="Schmid R."/>
            <person name="Marahiel M.A."/>
        </authorList>
    </citation>
    <scope>PROTEIN SEQUENCE OF 2-14</scope>
    <source>
        <strain>168 / JH642</strain>
    </source>
</reference>
<reference key="4">
    <citation type="journal article" date="1997" name="Electrophoresis">
        <title>First steps from a two-dimensional protein index towards a response-regulation map for Bacillus subtilis.</title>
        <authorList>
            <person name="Antelmann H."/>
            <person name="Bernhardt J."/>
            <person name="Schmid R."/>
            <person name="Mach H."/>
            <person name="Voelker U."/>
            <person name="Hecker M."/>
        </authorList>
    </citation>
    <scope>PROTEIN SEQUENCE OF 2-14</scope>
    <source>
        <strain>168 / IS58</strain>
    </source>
</reference>
<reference key="5">
    <citation type="journal article" date="2001" name="FEMS Microbiol. Lett.">
        <title>Functional analysis of the Bacillus subtilis cysK and cysJI genes.</title>
        <authorList>
            <person name="van der Ploeg J.R."/>
            <person name="Barone M."/>
            <person name="Leisinger T."/>
        </authorList>
    </citation>
    <scope>DETERMINATION OF TRANSCRIPTIONAL START SITE</scope>
    <scope>DISRUPTION PHENOTYPE</scope>
    <scope>INDUCTION</scope>
    <source>
        <strain>168 / BGSC1A1</strain>
    </source>
</reference>
<reference key="6">
    <citation type="journal article" date="2007" name="J. Bacteriol.">
        <title>Conversion of methionine to cysteine in Bacillus subtilis and its regulation.</title>
        <authorList>
            <person name="Hullo M.-F."/>
            <person name="Auger S."/>
            <person name="Soutourina O."/>
            <person name="Barzu O."/>
            <person name="Yvon M."/>
            <person name="Danchin A."/>
            <person name="Martin-Verstraete I."/>
        </authorList>
    </citation>
    <scope>CATALYTIC ACTIVITY</scope>
    <scope>DISRUPTION PHENOTYPE</scope>
    <source>
        <strain>168</strain>
    </source>
</reference>
<reference key="7">
    <citation type="journal article" date="2008" name="J. Biol. Chem.">
        <title>The CymR regulator in complex with the enzyme CysK controls cysteine metabolism in Bacillus subtilis.</title>
        <authorList>
            <person name="Tanous C."/>
            <person name="Soutourina O."/>
            <person name="Raynal B."/>
            <person name="Hullo M.-F."/>
            <person name="Mervelet P."/>
            <person name="Gilles A.-M."/>
            <person name="Noirot P."/>
            <person name="Danchin A."/>
            <person name="England P."/>
            <person name="Martin-Verstraete I."/>
        </authorList>
    </citation>
    <scope>FUNCTION AS A REGULATOR OF CYMR ACTIVITY</scope>
    <scope>INDUCTION</scope>
    <scope>SUBUNIT</scope>
    <scope>INTERACTION WITH CYMR</scope>
    <source>
        <strain>168</strain>
    </source>
</reference>
<evidence type="ECO:0000250" key="1"/>
<evidence type="ECO:0000269" key="2">
    <source>
    </source>
</evidence>
<evidence type="ECO:0000269" key="3">
    <source>
    </source>
</evidence>
<evidence type="ECO:0000269" key="4">
    <source>
    </source>
</evidence>
<evidence type="ECO:0000269" key="5">
    <source>
    </source>
</evidence>
<evidence type="ECO:0000269" key="6">
    <source>
    </source>
</evidence>
<evidence type="ECO:0000305" key="7"/>
<protein>
    <recommendedName>
        <fullName>Cysteine synthase</fullName>
        <shortName>CSase</shortName>
        <ecNumber>2.5.1.47</ecNumber>
    </recommendedName>
    <alternativeName>
        <fullName>O-acetylserine (thiol)-lyase</fullName>
        <shortName>OAS-TL</shortName>
    </alternativeName>
    <alternativeName>
        <fullName>Superoxide-inducible protein 11</fullName>
        <shortName>SOI11</shortName>
    </alternativeName>
</protein>
<keyword id="KW-0028">Amino-acid biosynthesis</keyword>
<keyword id="KW-0198">Cysteine biosynthesis</keyword>
<keyword id="KW-0903">Direct protein sequencing</keyword>
<keyword id="KW-0663">Pyridoxal phosphate</keyword>
<keyword id="KW-1185">Reference proteome</keyword>
<keyword id="KW-0808">Transferase</keyword>
<sequence length="308" mass="32820">MVRVANSITELIGNTPIVKLNRLADENSADVYLKLEYMNPGSSVKDRIGLAMIEAAEKEGKLKAGNTIIEPTSGNTGIGLAMVAAAKGLKAILVMPDTMSMERRNLLRAYGAELVLTPGAEGMKGAIKKAEELAEKHGYFVPQQFNNPSNPEIHRQTTGKEIVEQFGDDQLDAFVAGIGTGGTITGAGEVLKEAYPSIKIYAVEPSDSPVLSGGKPGPHKIQGIGAGFVPDILNTEVYDEIFPVKNEEAFEYARRAAREEGILGGISSGAAIYAALQVAKKLGKGKKVLAIIPSNGERYLSTPLYQFD</sequence>
<proteinExistence type="evidence at protein level"/>
<dbReference type="EC" id="2.5.1.47"/>
<dbReference type="EMBL" id="D26185">
    <property type="protein sequence ID" value="BAA05308.1"/>
    <property type="molecule type" value="Genomic_DNA"/>
</dbReference>
<dbReference type="EMBL" id="AL009126">
    <property type="protein sequence ID" value="CAB11849.1"/>
    <property type="molecule type" value="Genomic_DNA"/>
</dbReference>
<dbReference type="PIR" id="S66103">
    <property type="entry name" value="S66103"/>
</dbReference>
<dbReference type="RefSeq" id="NP_387954.1">
    <property type="nucleotide sequence ID" value="NC_000964.3"/>
</dbReference>
<dbReference type="RefSeq" id="WP_003244491.1">
    <property type="nucleotide sequence ID" value="NZ_OZ025638.1"/>
</dbReference>
<dbReference type="SMR" id="P37887"/>
<dbReference type="FunCoup" id="P37887">
    <property type="interactions" value="582"/>
</dbReference>
<dbReference type="IntAct" id="P37887">
    <property type="interactions" value="1"/>
</dbReference>
<dbReference type="MINT" id="P37887"/>
<dbReference type="STRING" id="224308.BSU00730"/>
<dbReference type="MoonProt" id="P37887"/>
<dbReference type="jPOST" id="P37887"/>
<dbReference type="PaxDb" id="224308-BSU00730"/>
<dbReference type="EnsemblBacteria" id="CAB11849">
    <property type="protein sequence ID" value="CAB11849"/>
    <property type="gene ID" value="BSU_00730"/>
</dbReference>
<dbReference type="GeneID" id="936636"/>
<dbReference type="KEGG" id="bsu:BSU00730"/>
<dbReference type="PATRIC" id="fig|224308.179.peg.73"/>
<dbReference type="eggNOG" id="COG0031">
    <property type="taxonomic scope" value="Bacteria"/>
</dbReference>
<dbReference type="InParanoid" id="P37887"/>
<dbReference type="OrthoDB" id="9808024at2"/>
<dbReference type="PhylomeDB" id="P37887"/>
<dbReference type="BioCyc" id="BSUB:BSU00730-MONOMER"/>
<dbReference type="BRENDA" id="2.5.1.47">
    <property type="organism ID" value="658"/>
</dbReference>
<dbReference type="SABIO-RK" id="P37887"/>
<dbReference type="UniPathway" id="UPA00136">
    <property type="reaction ID" value="UER00200"/>
</dbReference>
<dbReference type="Proteomes" id="UP000001570">
    <property type="component" value="Chromosome"/>
</dbReference>
<dbReference type="GO" id="GO:0005737">
    <property type="term" value="C:cytoplasm"/>
    <property type="evidence" value="ECO:0000318"/>
    <property type="project" value="GO_Central"/>
</dbReference>
<dbReference type="GO" id="GO:0032991">
    <property type="term" value="C:protein-containing complex"/>
    <property type="evidence" value="ECO:0000314"/>
    <property type="project" value="CAFA"/>
</dbReference>
<dbReference type="GO" id="GO:0032993">
    <property type="term" value="C:protein-DNA complex"/>
    <property type="evidence" value="ECO:0000314"/>
    <property type="project" value="CAFA"/>
</dbReference>
<dbReference type="GO" id="GO:0004122">
    <property type="term" value="F:cystathionine beta-synthase activity"/>
    <property type="evidence" value="ECO:0000314"/>
    <property type="project" value="CAFA"/>
</dbReference>
<dbReference type="GO" id="GO:0004124">
    <property type="term" value="F:cysteine synthase activity"/>
    <property type="evidence" value="ECO:0000314"/>
    <property type="project" value="CAFA"/>
</dbReference>
<dbReference type="GO" id="GO:0140297">
    <property type="term" value="F:DNA-binding transcription factor binding"/>
    <property type="evidence" value="ECO:0000353"/>
    <property type="project" value="CAFA"/>
</dbReference>
<dbReference type="GO" id="GO:0080146">
    <property type="term" value="F:L-cysteine desulfhydrase activity"/>
    <property type="evidence" value="ECO:0000318"/>
    <property type="project" value="GO_Central"/>
</dbReference>
<dbReference type="GO" id="GO:0042803">
    <property type="term" value="F:protein homodimerization activity"/>
    <property type="evidence" value="ECO:0000314"/>
    <property type="project" value="CAFA"/>
</dbReference>
<dbReference type="GO" id="GO:0006535">
    <property type="term" value="P:cysteine biosynthetic process from serine"/>
    <property type="evidence" value="ECO:0000314"/>
    <property type="project" value="CAFA"/>
</dbReference>
<dbReference type="GO" id="GO:0009087">
    <property type="term" value="P:methionine catabolic process"/>
    <property type="evidence" value="ECO:0000315"/>
    <property type="project" value="CAFA"/>
</dbReference>
<dbReference type="GO" id="GO:0008284">
    <property type="term" value="P:positive regulation of cell population proliferation"/>
    <property type="evidence" value="ECO:0000315"/>
    <property type="project" value="CAFA"/>
</dbReference>
<dbReference type="GO" id="GO:1904798">
    <property type="term" value="P:positive regulation of core promoter binding"/>
    <property type="evidence" value="ECO:0000314"/>
    <property type="project" value="CAFA"/>
</dbReference>
<dbReference type="CDD" id="cd01561">
    <property type="entry name" value="CBS_like"/>
    <property type="match status" value="1"/>
</dbReference>
<dbReference type="FunFam" id="3.40.50.1100:FF:000006">
    <property type="entry name" value="Cysteine synthase"/>
    <property type="match status" value="1"/>
</dbReference>
<dbReference type="Gene3D" id="3.40.50.1100">
    <property type="match status" value="2"/>
</dbReference>
<dbReference type="InterPro" id="IPR005856">
    <property type="entry name" value="Cys_synth"/>
</dbReference>
<dbReference type="InterPro" id="IPR050214">
    <property type="entry name" value="Cys_Synth/Cystath_Beta-Synth"/>
</dbReference>
<dbReference type="InterPro" id="IPR005859">
    <property type="entry name" value="CysK"/>
</dbReference>
<dbReference type="InterPro" id="IPR001216">
    <property type="entry name" value="P-phosphate_BS"/>
</dbReference>
<dbReference type="InterPro" id="IPR001926">
    <property type="entry name" value="TrpB-like_PALP"/>
</dbReference>
<dbReference type="InterPro" id="IPR036052">
    <property type="entry name" value="TrpB-like_PALP_sf"/>
</dbReference>
<dbReference type="NCBIfam" id="TIGR01139">
    <property type="entry name" value="cysK"/>
    <property type="match status" value="1"/>
</dbReference>
<dbReference type="NCBIfam" id="TIGR01136">
    <property type="entry name" value="cysKM"/>
    <property type="match status" value="1"/>
</dbReference>
<dbReference type="PANTHER" id="PTHR10314">
    <property type="entry name" value="CYSTATHIONINE BETA-SYNTHASE"/>
    <property type="match status" value="1"/>
</dbReference>
<dbReference type="Pfam" id="PF00291">
    <property type="entry name" value="PALP"/>
    <property type="match status" value="1"/>
</dbReference>
<dbReference type="SUPFAM" id="SSF53686">
    <property type="entry name" value="Tryptophan synthase beta subunit-like PLP-dependent enzymes"/>
    <property type="match status" value="1"/>
</dbReference>
<dbReference type="PROSITE" id="PS00901">
    <property type="entry name" value="CYS_SYNTHASE"/>
    <property type="match status" value="1"/>
</dbReference>